<protein>
    <recommendedName>
        <fullName evidence="4">Alpha-ionylideneethane synthase abl3</fullName>
        <ecNumber evidence="6">4.2.3.-</ecNumber>
    </recommendedName>
    <alternativeName>
        <fullName evidence="4">Abscisic acid biosynthesis protein 3</fullName>
    </alternativeName>
    <alternativeName>
        <fullName evidence="5">Sesquiterpene synthase ABA3</fullName>
    </alternativeName>
</protein>
<organism>
    <name type="scientific">Pyricularia oryzae (strain Y34)</name>
    <name type="common">Rice blast fungus</name>
    <name type="synonym">Magnaporthe oryzae</name>
    <dbReference type="NCBI Taxonomy" id="1143189"/>
    <lineage>
        <taxon>Eukaryota</taxon>
        <taxon>Fungi</taxon>
        <taxon>Dikarya</taxon>
        <taxon>Ascomycota</taxon>
        <taxon>Pezizomycotina</taxon>
        <taxon>Sordariomycetes</taxon>
        <taxon>Sordariomycetidae</taxon>
        <taxon>Magnaporthales</taxon>
        <taxon>Pyriculariaceae</taxon>
        <taxon>Pyricularia</taxon>
    </lineage>
</organism>
<dbReference type="EC" id="4.2.3.-" evidence="6"/>
<dbReference type="EMBL" id="JH793224">
    <property type="protein sequence ID" value="ELQ43177.1"/>
    <property type="molecule type" value="Genomic_DNA"/>
</dbReference>
<dbReference type="SMR" id="L7IKV1"/>
<dbReference type="OrthoDB" id="653371at147550"/>
<dbReference type="Proteomes" id="UP000011086">
    <property type="component" value="Unassembled WGS sequence"/>
</dbReference>
<dbReference type="GO" id="GO:0016829">
    <property type="term" value="F:lyase activity"/>
    <property type="evidence" value="ECO:0007669"/>
    <property type="project" value="UniProtKB-KW"/>
</dbReference>
<gene>
    <name evidence="4" type="primary">ABA3</name>
    <name evidence="7" type="ORF">OOU_Y34scaffold00166g3</name>
</gene>
<accession>L7IKV1</accession>
<feature type="chain" id="PRO_0000448434" description="Alpha-ionylideneethane synthase abl3">
    <location>
        <begin position="1"/>
        <end position="518"/>
    </location>
</feature>
<feature type="region of interest" description="Disordered" evidence="2">
    <location>
        <begin position="294"/>
        <end position="355"/>
    </location>
</feature>
<feature type="region of interest" description="Disordered" evidence="2">
    <location>
        <begin position="440"/>
        <end position="466"/>
    </location>
</feature>
<feature type="compositionally biased region" description="Low complexity" evidence="2">
    <location>
        <begin position="299"/>
        <end position="339"/>
    </location>
</feature>
<proteinExistence type="inferred from homology"/>
<reference key="1">
    <citation type="journal article" date="2012" name="PLoS Genet.">
        <title>Comparative analysis of the genomes of two field isolates of the rice blast fungus Magnaporthe oryzae.</title>
        <authorList>
            <person name="Xue M."/>
            <person name="Yang J."/>
            <person name="Li Z."/>
            <person name="Hu S."/>
            <person name="Yao N."/>
            <person name="Dean R.A."/>
            <person name="Zhao W."/>
            <person name="Shen M."/>
            <person name="Zhang H."/>
            <person name="Li C."/>
            <person name="Liu L."/>
            <person name="Cao L."/>
            <person name="Xu X."/>
            <person name="Xing Y."/>
            <person name="Hsiang T."/>
            <person name="Zhang Z."/>
            <person name="Xu J.-R."/>
            <person name="Peng Y.-L."/>
        </authorList>
    </citation>
    <scope>NUCLEOTIDE SEQUENCE [LARGE SCALE GENOMIC DNA]</scope>
    <source>
        <strain>Y34</strain>
    </source>
</reference>
<reference key="2">
    <citation type="journal article" date="2015" name="Front. Plant Sci.">
        <title>Crucial roles of abscisic acid biogenesis in virulence of rice blast fungus Magnaporthe oryzae.</title>
        <authorList>
            <person name="Spence C.A."/>
            <person name="Lakshmanan V."/>
            <person name="Donofrio N."/>
            <person name="Bais H.P."/>
        </authorList>
    </citation>
    <scope>FUNCTION</scope>
</reference>
<reference key="3">
    <citation type="journal article" date="2017" name="Front. Plant Sci.">
        <title>Abscisic acid as pathogen effector and immune regulator.</title>
        <authorList>
            <person name="Lievens L."/>
            <person name="Pollier J."/>
            <person name="Goossens A."/>
            <person name="Beyaert R."/>
            <person name="Staal J."/>
        </authorList>
    </citation>
    <scope>IDENTIFICATION</scope>
    <scope>FUNCTION</scope>
    <scope>PATHWAY</scope>
</reference>
<name>ABA3_PYRO3</name>
<evidence type="ECO:0000250" key="1">
    <source>
        <dbReference type="UniProtKB" id="Q14RS2"/>
    </source>
</evidence>
<evidence type="ECO:0000256" key="2">
    <source>
        <dbReference type="SAM" id="MobiDB-lite"/>
    </source>
</evidence>
<evidence type="ECO:0000269" key="3">
    <source>
    </source>
</evidence>
<evidence type="ECO:0000303" key="4">
    <source>
    </source>
</evidence>
<evidence type="ECO:0000305" key="5"/>
<evidence type="ECO:0000305" key="6">
    <source>
    </source>
</evidence>
<evidence type="ECO:0000312" key="7">
    <source>
        <dbReference type="EMBL" id="ELQ43177.1"/>
    </source>
</evidence>
<keyword id="KW-0456">Lyase</keyword>
<keyword id="KW-0843">Virulence</keyword>
<comment type="function">
    <text evidence="1 3">Alpha-ionylideneethane synthase involved in the biosynthesis of abscisic acid (ABA), a phytohormone that acts antagonistically toward salicylic acid (SA), jasmonic acid (JA) and ethylene (ETH) signaling, to impede plant defense responses (PubMed:26648962). During pathogen-host interaction, ABA plays a dual role in disease severity by increasing plant susceptibility and accelerating pathogenesis in the fungus itself (PubMed:26648962). The first step of the pathway catalyzes the reaction from farnesyl diphosphate to alpha-ionylideneethane performed by the alpha-ionylideneethane synthase ABA3 via a three-step reaction mechanism involving 2 neutral intermediates, beta-farnesene and allofarnesene (By similarity). The cytochrome P450 monooxygenase ABA1 might then be involved in the conversion of alpha-ionylideneethane to alpha-ionylideneacetic acid (By similarity). Alpha-ionylideneacetic acid is further converted to abscisic acid in 2 steps involving the cytochrome P450 monooxygenase ABA2 and the short-chain dehydrogenase/reductase ABA4, via the intermediates 1'-deoxy-ABA or 1',4'-trans-diol-ABA, depending on the order of action of these 2 enzymes (By similarity). ABA2 is responsible for the hydroxylation of carbon atom C-1' and ABA4 might be involved in the oxidation of the C-4' carbon atom (By similarity).</text>
</comment>
<comment type="pathway">
    <text evidence="6">Hormone biosynthesis.</text>
</comment>
<comment type="similarity">
    <text evidence="5">Belongs to the alpha-ionylideneethane synthase family.</text>
</comment>
<sequence>MPPRFNDSWYYPDDIAHDLDGVEGLSEALKQEAYACAWEYTRCVIPQYTNWDRYVAFMRTIIIGIIAEFRGELVDVAASDSIMGCYSLSAVLDALFEGTPGRELMVREYKTFLLVTSEKTSKRRDSELFRRYVNGLAASPRSWFRMRDCDALARFSLAAALACNDMYDVFPTDEQFELLTEIGDTLYDAVAFYKHRSEGETNNTFAYVPADMRIQAFRVAREMLWALDVAYAHKPEGAILVNFIRFFGGPIHMMMRRYRFVEEDLTVGKPETAAVVAETRRNFKLWNRVDAQVAAPGQTSSDNSSDNRSSSISSTSSTGTDGSGAGDASSVHSSGVHSDATSIEPEKEDQSSVFEAPGADRFRSLLARSKELMFPELRAYLSRSGEPHCNRCLYRSSYGAQQIHRFGGVELCRGCRAMWRGYVESLPERVQEAFPDVVLKAPPPPSPRRAVPADGEADSAAGQRSKRLREDLTAAGEYTTVAETVPAEDVPRSAPDIMEDVLQAECAIDDMRSAVAVF</sequence>